<name>ZN702_HUMAN</name>
<accession>Q9H963</accession>
<accession>Q05BW1</accession>
<proteinExistence type="uncertain"/>
<reference key="1">
    <citation type="journal article" date="2004" name="Nat. Genet.">
        <title>Complete sequencing and characterization of 21,243 full-length human cDNAs.</title>
        <authorList>
            <person name="Ota T."/>
            <person name="Suzuki Y."/>
            <person name="Nishikawa T."/>
            <person name="Otsuki T."/>
            <person name="Sugiyama T."/>
            <person name="Irie R."/>
            <person name="Wakamatsu A."/>
            <person name="Hayashi K."/>
            <person name="Sato H."/>
            <person name="Nagai K."/>
            <person name="Kimura K."/>
            <person name="Makita H."/>
            <person name="Sekine M."/>
            <person name="Obayashi M."/>
            <person name="Nishi T."/>
            <person name="Shibahara T."/>
            <person name="Tanaka T."/>
            <person name="Ishii S."/>
            <person name="Yamamoto J."/>
            <person name="Saito K."/>
            <person name="Kawai Y."/>
            <person name="Isono Y."/>
            <person name="Nakamura Y."/>
            <person name="Nagahari K."/>
            <person name="Murakami K."/>
            <person name="Yasuda T."/>
            <person name="Iwayanagi T."/>
            <person name="Wagatsuma M."/>
            <person name="Shiratori A."/>
            <person name="Sudo H."/>
            <person name="Hosoiri T."/>
            <person name="Kaku Y."/>
            <person name="Kodaira H."/>
            <person name="Kondo H."/>
            <person name="Sugawara M."/>
            <person name="Takahashi M."/>
            <person name="Kanda K."/>
            <person name="Yokoi T."/>
            <person name="Furuya T."/>
            <person name="Kikkawa E."/>
            <person name="Omura Y."/>
            <person name="Abe K."/>
            <person name="Kamihara K."/>
            <person name="Katsuta N."/>
            <person name="Sato K."/>
            <person name="Tanikawa M."/>
            <person name="Yamazaki M."/>
            <person name="Ninomiya K."/>
            <person name="Ishibashi T."/>
            <person name="Yamashita H."/>
            <person name="Murakawa K."/>
            <person name="Fujimori K."/>
            <person name="Tanai H."/>
            <person name="Kimata M."/>
            <person name="Watanabe M."/>
            <person name="Hiraoka S."/>
            <person name="Chiba Y."/>
            <person name="Ishida S."/>
            <person name="Ono Y."/>
            <person name="Takiguchi S."/>
            <person name="Watanabe S."/>
            <person name="Yosida M."/>
            <person name="Hotuta T."/>
            <person name="Kusano J."/>
            <person name="Kanehori K."/>
            <person name="Takahashi-Fujii A."/>
            <person name="Hara H."/>
            <person name="Tanase T.-O."/>
            <person name="Nomura Y."/>
            <person name="Togiya S."/>
            <person name="Komai F."/>
            <person name="Hara R."/>
            <person name="Takeuchi K."/>
            <person name="Arita M."/>
            <person name="Imose N."/>
            <person name="Musashino K."/>
            <person name="Yuuki H."/>
            <person name="Oshima A."/>
            <person name="Sasaki N."/>
            <person name="Aotsuka S."/>
            <person name="Yoshikawa Y."/>
            <person name="Matsunawa H."/>
            <person name="Ichihara T."/>
            <person name="Shiohata N."/>
            <person name="Sano S."/>
            <person name="Moriya S."/>
            <person name="Momiyama H."/>
            <person name="Satoh N."/>
            <person name="Takami S."/>
            <person name="Terashima Y."/>
            <person name="Suzuki O."/>
            <person name="Nakagawa S."/>
            <person name="Senoh A."/>
            <person name="Mizoguchi H."/>
            <person name="Goto Y."/>
            <person name="Shimizu F."/>
            <person name="Wakebe H."/>
            <person name="Hishigaki H."/>
            <person name="Watanabe T."/>
            <person name="Sugiyama A."/>
            <person name="Takemoto M."/>
            <person name="Kawakami B."/>
            <person name="Yamazaki M."/>
            <person name="Watanabe K."/>
            <person name="Kumagai A."/>
            <person name="Itakura S."/>
            <person name="Fukuzumi Y."/>
            <person name="Fujimori Y."/>
            <person name="Komiyama M."/>
            <person name="Tashiro H."/>
            <person name="Tanigami A."/>
            <person name="Fujiwara T."/>
            <person name="Ono T."/>
            <person name="Yamada K."/>
            <person name="Fujii Y."/>
            <person name="Ozaki K."/>
            <person name="Hirao M."/>
            <person name="Ohmori Y."/>
            <person name="Kawabata A."/>
            <person name="Hikiji T."/>
            <person name="Kobatake N."/>
            <person name="Inagaki H."/>
            <person name="Ikema Y."/>
            <person name="Okamoto S."/>
            <person name="Okitani R."/>
            <person name="Kawakami T."/>
            <person name="Noguchi S."/>
            <person name="Itoh T."/>
            <person name="Shigeta K."/>
            <person name="Senba T."/>
            <person name="Matsumura K."/>
            <person name="Nakajima Y."/>
            <person name="Mizuno T."/>
            <person name="Morinaga M."/>
            <person name="Sasaki M."/>
            <person name="Togashi T."/>
            <person name="Oyama M."/>
            <person name="Hata H."/>
            <person name="Watanabe M."/>
            <person name="Komatsu T."/>
            <person name="Mizushima-Sugano J."/>
            <person name="Satoh T."/>
            <person name="Shirai Y."/>
            <person name="Takahashi Y."/>
            <person name="Nakagawa K."/>
            <person name="Okumura K."/>
            <person name="Nagase T."/>
            <person name="Nomura N."/>
            <person name="Kikuchi H."/>
            <person name="Masuho Y."/>
            <person name="Yamashita R."/>
            <person name="Nakai K."/>
            <person name="Yada T."/>
            <person name="Nakamura Y."/>
            <person name="Ohara O."/>
            <person name="Isogai T."/>
            <person name="Sugano S."/>
        </authorList>
    </citation>
    <scope>NUCLEOTIDE SEQUENCE [LARGE SCALE MRNA]</scope>
    <source>
        <tissue>Prostate</tissue>
        <tissue>Teratocarcinoma</tissue>
    </source>
</reference>
<reference key="2">
    <citation type="journal article" date="2004" name="Nature">
        <title>The DNA sequence and biology of human chromosome 19.</title>
        <authorList>
            <person name="Grimwood J."/>
            <person name="Gordon L.A."/>
            <person name="Olsen A.S."/>
            <person name="Terry A."/>
            <person name="Schmutz J."/>
            <person name="Lamerdin J.E."/>
            <person name="Hellsten U."/>
            <person name="Goodstein D."/>
            <person name="Couronne O."/>
            <person name="Tran-Gyamfi M."/>
            <person name="Aerts A."/>
            <person name="Altherr M."/>
            <person name="Ashworth L."/>
            <person name="Bajorek E."/>
            <person name="Black S."/>
            <person name="Branscomb E."/>
            <person name="Caenepeel S."/>
            <person name="Carrano A.V."/>
            <person name="Caoile C."/>
            <person name="Chan Y.M."/>
            <person name="Christensen M."/>
            <person name="Cleland C.A."/>
            <person name="Copeland A."/>
            <person name="Dalin E."/>
            <person name="Dehal P."/>
            <person name="Denys M."/>
            <person name="Detter J.C."/>
            <person name="Escobar J."/>
            <person name="Flowers D."/>
            <person name="Fotopulos D."/>
            <person name="Garcia C."/>
            <person name="Georgescu A.M."/>
            <person name="Glavina T."/>
            <person name="Gomez M."/>
            <person name="Gonzales E."/>
            <person name="Groza M."/>
            <person name="Hammon N."/>
            <person name="Hawkins T."/>
            <person name="Haydu L."/>
            <person name="Ho I."/>
            <person name="Huang W."/>
            <person name="Israni S."/>
            <person name="Jett J."/>
            <person name="Kadner K."/>
            <person name="Kimball H."/>
            <person name="Kobayashi A."/>
            <person name="Larionov V."/>
            <person name="Leem S.-H."/>
            <person name="Lopez F."/>
            <person name="Lou Y."/>
            <person name="Lowry S."/>
            <person name="Malfatti S."/>
            <person name="Martinez D."/>
            <person name="McCready P.M."/>
            <person name="Medina C."/>
            <person name="Morgan J."/>
            <person name="Nelson K."/>
            <person name="Nolan M."/>
            <person name="Ovcharenko I."/>
            <person name="Pitluck S."/>
            <person name="Pollard M."/>
            <person name="Popkie A.P."/>
            <person name="Predki P."/>
            <person name="Quan G."/>
            <person name="Ramirez L."/>
            <person name="Rash S."/>
            <person name="Retterer J."/>
            <person name="Rodriguez A."/>
            <person name="Rogers S."/>
            <person name="Salamov A."/>
            <person name="Salazar A."/>
            <person name="She X."/>
            <person name="Smith D."/>
            <person name="Slezak T."/>
            <person name="Solovyev V."/>
            <person name="Thayer N."/>
            <person name="Tice H."/>
            <person name="Tsai M."/>
            <person name="Ustaszewska A."/>
            <person name="Vo N."/>
            <person name="Wagner M."/>
            <person name="Wheeler J."/>
            <person name="Wu K."/>
            <person name="Xie G."/>
            <person name="Yang J."/>
            <person name="Dubchak I."/>
            <person name="Furey T.S."/>
            <person name="DeJong P."/>
            <person name="Dickson M."/>
            <person name="Gordon D."/>
            <person name="Eichler E.E."/>
            <person name="Pennacchio L.A."/>
            <person name="Richardson P."/>
            <person name="Stubbs L."/>
            <person name="Rokhsar D.S."/>
            <person name="Myers R.M."/>
            <person name="Rubin E.M."/>
            <person name="Lucas S.M."/>
        </authorList>
    </citation>
    <scope>NUCLEOTIDE SEQUENCE [LARGE SCALE GENOMIC DNA]</scope>
</reference>
<reference key="3">
    <citation type="journal article" date="2004" name="Genome Res.">
        <title>The status, quality, and expansion of the NIH full-length cDNA project: the Mammalian Gene Collection (MGC).</title>
        <authorList>
            <consortium name="The MGC Project Team"/>
        </authorList>
    </citation>
    <scope>NUCLEOTIDE SEQUENCE [LARGE SCALE MRNA]</scope>
    <source>
        <tissue>Eye</tissue>
    </source>
</reference>
<dbReference type="EMBL" id="AK023047">
    <property type="status" value="NOT_ANNOTATED_CDS"/>
    <property type="molecule type" value="mRNA"/>
</dbReference>
<dbReference type="EMBL" id="AK092593">
    <property type="protein sequence ID" value="BAG52576.1"/>
    <property type="molecule type" value="mRNA"/>
</dbReference>
<dbReference type="EMBL" id="AC010328">
    <property type="status" value="NOT_ANNOTATED_CDS"/>
    <property type="molecule type" value="Genomic_DNA"/>
</dbReference>
<dbReference type="EMBL" id="BC032590">
    <property type="status" value="NOT_ANNOTATED_CDS"/>
    <property type="molecule type" value="mRNA"/>
</dbReference>
<dbReference type="SMR" id="Q9H963"/>
<dbReference type="FunCoup" id="Q9H963">
    <property type="interactions" value="1"/>
</dbReference>
<dbReference type="IntAct" id="Q9H963">
    <property type="interactions" value="1"/>
</dbReference>
<dbReference type="iPTMnet" id="Q9H963"/>
<dbReference type="PhosphoSitePlus" id="Q9H963"/>
<dbReference type="BioMuta" id="HGNC:25775"/>
<dbReference type="DMDM" id="212276485"/>
<dbReference type="jPOST" id="Q9H963"/>
<dbReference type="MassIVE" id="Q9H963"/>
<dbReference type="PeptideAtlas" id="Q9H963"/>
<dbReference type="ProteomicsDB" id="81285"/>
<dbReference type="AGR" id="HGNC:25775"/>
<dbReference type="GeneCards" id="ZNF702P"/>
<dbReference type="HGNC" id="HGNC:25775">
    <property type="gene designation" value="ZNF702P"/>
</dbReference>
<dbReference type="neXtProt" id="NX_Q9H963"/>
<dbReference type="PharmGKB" id="PA142670499"/>
<dbReference type="InParanoid" id="Q9H963"/>
<dbReference type="PAN-GO" id="Q9H963">
    <property type="GO annotations" value="0 GO annotations based on evolutionary models"/>
</dbReference>
<dbReference type="PhylomeDB" id="Q9H963"/>
<dbReference type="PathwayCommons" id="Q9H963"/>
<dbReference type="Reactome" id="R-HSA-212436">
    <property type="pathway name" value="Generic Transcription Pathway"/>
</dbReference>
<dbReference type="SignaLink" id="Q9H963"/>
<dbReference type="ChiTaRS" id="ZNF702P">
    <property type="organism name" value="human"/>
</dbReference>
<dbReference type="Pharos" id="Q9H963">
    <property type="development level" value="Tdark"/>
</dbReference>
<dbReference type="PRO" id="PR:Q9H963"/>
<dbReference type="Proteomes" id="UP000005640">
    <property type="component" value="Unplaced"/>
</dbReference>
<dbReference type="RNAct" id="Q9H963">
    <property type="molecule type" value="protein"/>
</dbReference>
<dbReference type="GO" id="GO:0005634">
    <property type="term" value="C:nucleus"/>
    <property type="evidence" value="ECO:0007669"/>
    <property type="project" value="UniProtKB-SubCell"/>
</dbReference>
<dbReference type="GO" id="GO:0003677">
    <property type="term" value="F:DNA binding"/>
    <property type="evidence" value="ECO:0007669"/>
    <property type="project" value="UniProtKB-KW"/>
</dbReference>
<dbReference type="GO" id="GO:0003700">
    <property type="term" value="F:DNA-binding transcription factor activity"/>
    <property type="evidence" value="ECO:0000303"/>
    <property type="project" value="ARUK-UCL"/>
</dbReference>
<dbReference type="GO" id="GO:0008270">
    <property type="term" value="F:zinc ion binding"/>
    <property type="evidence" value="ECO:0007669"/>
    <property type="project" value="UniProtKB-KW"/>
</dbReference>
<dbReference type="FunFam" id="3.30.160.60:FF:000295">
    <property type="entry name" value="zinc finger protein 19"/>
    <property type="match status" value="1"/>
</dbReference>
<dbReference type="FunFam" id="3.30.160.60:FF:000176">
    <property type="entry name" value="zinc finger protein 70"/>
    <property type="match status" value="1"/>
</dbReference>
<dbReference type="FunFam" id="3.30.160.60:FF:000188">
    <property type="entry name" value="Zinc finger protein 787"/>
    <property type="match status" value="1"/>
</dbReference>
<dbReference type="FunFam" id="3.30.160.60:FF:002292">
    <property type="entry name" value="Zinc finger protein 816"/>
    <property type="match status" value="1"/>
</dbReference>
<dbReference type="FunFam" id="3.30.160.60:FF:001630">
    <property type="entry name" value="Zinc finger protein 888"/>
    <property type="match status" value="1"/>
</dbReference>
<dbReference type="Gene3D" id="3.30.160.60">
    <property type="entry name" value="Classic Zinc Finger"/>
    <property type="match status" value="5"/>
</dbReference>
<dbReference type="InterPro" id="IPR036236">
    <property type="entry name" value="Znf_C2H2_sf"/>
</dbReference>
<dbReference type="InterPro" id="IPR013087">
    <property type="entry name" value="Znf_C2H2_type"/>
</dbReference>
<dbReference type="PANTHER" id="PTHR14003">
    <property type="entry name" value="TRANSCRIPTIONAL REPRESSOR PROTEIN YY"/>
    <property type="match status" value="1"/>
</dbReference>
<dbReference type="PANTHER" id="PTHR14003:SF23">
    <property type="entry name" value="ZINC FINGER PROTEIN 143"/>
    <property type="match status" value="1"/>
</dbReference>
<dbReference type="Pfam" id="PF00096">
    <property type="entry name" value="zf-C2H2"/>
    <property type="match status" value="3"/>
</dbReference>
<dbReference type="SMART" id="SM00355">
    <property type="entry name" value="ZnF_C2H2"/>
    <property type="match status" value="3"/>
</dbReference>
<dbReference type="SUPFAM" id="SSF57667">
    <property type="entry name" value="beta-beta-alpha zinc fingers"/>
    <property type="match status" value="2"/>
</dbReference>
<dbReference type="PROSITE" id="PS00028">
    <property type="entry name" value="ZINC_FINGER_C2H2_1"/>
    <property type="match status" value="3"/>
</dbReference>
<dbReference type="PROSITE" id="PS50157">
    <property type="entry name" value="ZINC_FINGER_C2H2_2"/>
    <property type="match status" value="4"/>
</dbReference>
<comment type="function">
    <text>May be involved in transcriptional regulation.</text>
</comment>
<comment type="interaction">
    <interactant intactId="EBI-10309738">
        <id>Q9H963</id>
    </interactant>
    <interactant intactId="EBI-10171697">
        <id>Q6A162</id>
        <label>KRT40</label>
    </interactant>
    <organismsDiffer>false</organismsDiffer>
    <experiments>3</experiments>
</comment>
<comment type="subcellular location">
    <subcellularLocation>
        <location evidence="2">Nucleus</location>
    </subcellularLocation>
</comment>
<comment type="similarity">
    <text evidence="2">Belongs to the krueppel C2H2-type zinc-finger protein family.</text>
</comment>
<comment type="caution">
    <text evidence="2">Could be the product of a pseudogene.</text>
</comment>
<feature type="chain" id="PRO_0000233707" description="Putative zinc finger protein 702">
    <location>
        <begin position="1"/>
        <end position="129"/>
    </location>
</feature>
<feature type="zinc finger region" description="C2H2-type 1" evidence="1">
    <location>
        <begin position="34"/>
        <end position="56"/>
    </location>
</feature>
<feature type="zinc finger region" description="C2H2-type 2" evidence="1">
    <location>
        <begin position="62"/>
        <end position="84"/>
    </location>
</feature>
<feature type="zinc finger region" description="C2H2-type 3" evidence="1">
    <location>
        <begin position="90"/>
        <end position="112"/>
    </location>
</feature>
<feature type="sequence conflict" description="In Ref. 1; AK023047." evidence="2" ref="1">
    <original>L</original>
    <variation>F</variation>
    <location>
        <position position="105"/>
    </location>
</feature>
<keyword id="KW-0238">DNA-binding</keyword>
<keyword id="KW-0479">Metal-binding</keyword>
<keyword id="KW-0539">Nucleus</keyword>
<keyword id="KW-1185">Reference proteome</keyword>
<keyword id="KW-0677">Repeat</keyword>
<keyword id="KW-0804">Transcription</keyword>
<keyword id="KW-0805">Transcription regulation</keyword>
<keyword id="KW-0862">Zinc</keyword>
<keyword id="KW-0863">Zinc-finger</keyword>
<protein>
    <recommendedName>
        <fullName>Putative zinc finger protein 702</fullName>
    </recommendedName>
</protein>
<organism>
    <name type="scientific">Homo sapiens</name>
    <name type="common">Human</name>
    <dbReference type="NCBI Taxonomy" id="9606"/>
    <lineage>
        <taxon>Eukaryota</taxon>
        <taxon>Metazoa</taxon>
        <taxon>Chordata</taxon>
        <taxon>Craniata</taxon>
        <taxon>Vertebrata</taxon>
        <taxon>Euteleostomi</taxon>
        <taxon>Mammalia</taxon>
        <taxon>Eutheria</taxon>
        <taxon>Euarchontoglires</taxon>
        <taxon>Primates</taxon>
        <taxon>Haplorrhini</taxon>
        <taxon>Catarrhini</taxon>
        <taxon>Hominidae</taxon>
        <taxon>Homo</taxon>
    </lineage>
</organism>
<evidence type="ECO:0000255" key="1">
    <source>
        <dbReference type="PROSITE-ProRule" id="PRU00042"/>
    </source>
</evidence>
<evidence type="ECO:0000305" key="2"/>
<gene>
    <name type="primary">ZNF702P</name>
    <name type="synonym">ZNF702</name>
</gene>
<sequence>MREKSFQCNESGKAFNCSSLLKKCQIIHLGEKKYKCDICGKVFNQKRYLAYHHRCHTGEKPYKCNQCGKTFSYKSSLVIHKAIHTGEKPHKCNECGKVFNQKAYLASHHRLHTGEKPYKCEECDKVFSR</sequence>